<gene>
    <name type="primary">nnr</name>
    <name type="ordered locus">Mhun_2277</name>
</gene>
<comment type="function">
    <text evidence="1">Bifunctional enzyme that catalyzes the epimerization of the S- and R-forms of NAD(P)HX and the dehydration of the S-form of NAD(P)HX at the expense of ADP, which is converted to AMP. This allows the repair of both epimers of NAD(P)HX, a damaged form of NAD(P)H that is a result of enzymatic or heat-dependent hydration (By similarity).</text>
</comment>
<comment type="catalytic activity">
    <reaction>
        <text>(6S)-NADHX + ADP = AMP + phosphate + NADH + H(+)</text>
        <dbReference type="Rhea" id="RHEA:32223"/>
        <dbReference type="ChEBI" id="CHEBI:15378"/>
        <dbReference type="ChEBI" id="CHEBI:43474"/>
        <dbReference type="ChEBI" id="CHEBI:57945"/>
        <dbReference type="ChEBI" id="CHEBI:64074"/>
        <dbReference type="ChEBI" id="CHEBI:456215"/>
        <dbReference type="ChEBI" id="CHEBI:456216"/>
        <dbReference type="EC" id="4.2.1.136"/>
    </reaction>
</comment>
<comment type="catalytic activity">
    <reaction>
        <text>(6S)-NADPHX + ADP = AMP + phosphate + NADPH + H(+)</text>
        <dbReference type="Rhea" id="RHEA:32235"/>
        <dbReference type="ChEBI" id="CHEBI:15378"/>
        <dbReference type="ChEBI" id="CHEBI:43474"/>
        <dbReference type="ChEBI" id="CHEBI:57783"/>
        <dbReference type="ChEBI" id="CHEBI:64076"/>
        <dbReference type="ChEBI" id="CHEBI:456215"/>
        <dbReference type="ChEBI" id="CHEBI:456216"/>
        <dbReference type="EC" id="4.2.1.136"/>
    </reaction>
</comment>
<comment type="catalytic activity">
    <reaction>
        <text>(6R)-NADHX = (6S)-NADHX</text>
        <dbReference type="Rhea" id="RHEA:32215"/>
        <dbReference type="ChEBI" id="CHEBI:64074"/>
        <dbReference type="ChEBI" id="CHEBI:64075"/>
        <dbReference type="EC" id="5.1.99.6"/>
    </reaction>
</comment>
<comment type="catalytic activity">
    <reaction>
        <text>(6R)-NADPHX = (6S)-NADPHX</text>
        <dbReference type="Rhea" id="RHEA:32227"/>
        <dbReference type="ChEBI" id="CHEBI:64076"/>
        <dbReference type="ChEBI" id="CHEBI:64077"/>
        <dbReference type="EC" id="5.1.99.6"/>
    </reaction>
</comment>
<comment type="cofactor">
    <cofactor evidence="1">
        <name>K(+)</name>
        <dbReference type="ChEBI" id="CHEBI:29103"/>
    </cofactor>
    <text evidence="1">Binds 1 potassium ion per subunit.</text>
</comment>
<comment type="similarity">
    <text evidence="2">In the N-terminal section; belongs to the NnrE/AIBP family.</text>
</comment>
<comment type="similarity">
    <text evidence="2">In the C-terminal section; belongs to the NnrD/CARKD family.</text>
</comment>
<organism>
    <name type="scientific">Methanospirillum hungatei JF-1 (strain ATCC 27890 / DSM 864 / NBRC 100397 / JF-1)</name>
    <dbReference type="NCBI Taxonomy" id="323259"/>
    <lineage>
        <taxon>Archaea</taxon>
        <taxon>Methanobacteriati</taxon>
        <taxon>Methanobacteriota</taxon>
        <taxon>Stenosarchaea group</taxon>
        <taxon>Methanomicrobia</taxon>
        <taxon>Methanomicrobiales</taxon>
        <taxon>Methanospirillaceae</taxon>
        <taxon>Methanospirillum</taxon>
    </lineage>
</organism>
<feature type="chain" id="PRO_0000416430" description="Bifunctional NAD(P)H-hydrate repair enzyme Nnr">
    <location>
        <begin position="1"/>
        <end position="479"/>
    </location>
</feature>
<feature type="domain" description="YjeF N-terminal">
    <location>
        <begin position="31"/>
        <end position="214"/>
    </location>
</feature>
<feature type="domain" description="YjeF C-terminal">
    <location>
        <begin position="216"/>
        <end position="474"/>
    </location>
</feature>
<feature type="region of interest" description="NAD(P)H-hydrate epimerase" evidence="1">
    <location>
        <begin position="1"/>
        <end position="214"/>
    </location>
</feature>
<feature type="region of interest" description="NADPHX 1; for epimerase activity" evidence="1">
    <location>
        <begin position="76"/>
        <end position="80"/>
    </location>
</feature>
<feature type="region of interest" description="NADPHX 1; for epimerase activity" evidence="1">
    <location>
        <begin position="150"/>
        <end position="156"/>
    </location>
</feature>
<feature type="region of interest" description="ADP-dependent (S)-NAD(P)H-hydrate dehydratase" evidence="1">
    <location>
        <begin position="216"/>
        <end position="479"/>
    </location>
</feature>
<feature type="region of interest" description="NADPHX 2; for dehydratase activity" evidence="1">
    <location>
        <begin position="353"/>
        <end position="359"/>
    </location>
</feature>
<feature type="binding site" evidence="1">
    <location>
        <position position="77"/>
    </location>
    <ligand>
        <name>K(+)</name>
        <dbReference type="ChEBI" id="CHEBI:29103"/>
    </ligand>
</feature>
<feature type="binding site" evidence="1">
    <location>
        <position position="146"/>
    </location>
    <ligand>
        <name>K(+)</name>
        <dbReference type="ChEBI" id="CHEBI:29103"/>
    </ligand>
</feature>
<feature type="binding site" evidence="1">
    <location>
        <position position="179"/>
    </location>
    <ligand>
        <name>(6S)-NADPHX</name>
        <dbReference type="ChEBI" id="CHEBI:64076"/>
        <label>1</label>
        <note>for epimerase activity</note>
    </ligand>
</feature>
<feature type="binding site" evidence="1">
    <location>
        <position position="182"/>
    </location>
    <ligand>
        <name>K(+)</name>
        <dbReference type="ChEBI" id="CHEBI:29103"/>
    </ligand>
</feature>
<feature type="binding site" evidence="1">
    <location>
        <position position="312"/>
    </location>
    <ligand>
        <name>(6S)-NADPHX</name>
        <dbReference type="ChEBI" id="CHEBI:64076"/>
        <label>2</label>
        <note>for dehydratase activity</note>
    </ligand>
</feature>
<feature type="binding site" evidence="1">
    <location>
        <begin position="388"/>
        <end position="392"/>
    </location>
    <ligand>
        <name>ADP</name>
        <dbReference type="ChEBI" id="CHEBI:456216"/>
    </ligand>
</feature>
<feature type="binding site" evidence="1">
    <location>
        <begin position="407"/>
        <end position="416"/>
    </location>
    <ligand>
        <name>ADP</name>
        <dbReference type="ChEBI" id="CHEBI:456216"/>
    </ligand>
</feature>
<feature type="binding site" evidence="1">
    <location>
        <position position="417"/>
    </location>
    <ligand>
        <name>(6S)-NADPHX</name>
        <dbReference type="ChEBI" id="CHEBI:64076"/>
        <label>2</label>
        <note>for dehydratase activity</note>
    </ligand>
</feature>
<evidence type="ECO:0000250" key="1"/>
<evidence type="ECO:0000305" key="2"/>
<name>NNR_METHJ</name>
<reference key="1">
    <citation type="journal article" date="2016" name="Stand. Genomic Sci.">
        <title>Complete genome sequence of Methanospirillum hungatei type strain JF1.</title>
        <authorList>
            <person name="Gunsalus R.P."/>
            <person name="Cook L.E."/>
            <person name="Crable B."/>
            <person name="Rohlin L."/>
            <person name="McDonald E."/>
            <person name="Mouttaki H."/>
            <person name="Sieber J.R."/>
            <person name="Poweleit N."/>
            <person name="Zhou H."/>
            <person name="Lapidus A.L."/>
            <person name="Daligault H.E."/>
            <person name="Land M."/>
            <person name="Gilna P."/>
            <person name="Ivanova N."/>
            <person name="Kyrpides N."/>
            <person name="Culley D.E."/>
            <person name="McInerney M.J."/>
        </authorList>
    </citation>
    <scope>NUCLEOTIDE SEQUENCE [LARGE SCALE GENOMIC DNA]</scope>
    <source>
        <strain>ATCC 27890 / DSM 864 / NBRC 100397 / JF-1</strain>
    </source>
</reference>
<proteinExistence type="inferred from homology"/>
<protein>
    <recommendedName>
        <fullName>Bifunctional NAD(P)H-hydrate repair enzyme Nnr</fullName>
    </recommendedName>
    <alternativeName>
        <fullName>Nicotinamide nucleotide repair protein</fullName>
    </alternativeName>
    <domain>
        <recommendedName>
            <fullName>ADP-dependent (S)-NAD(P)H-hydrate dehydratase</fullName>
            <ecNumber>4.2.1.136</ecNumber>
        </recommendedName>
        <alternativeName>
            <fullName>ADP-dependent NAD(P)HX dehydratase</fullName>
        </alternativeName>
    </domain>
    <domain>
        <recommendedName>
            <fullName>NAD(P)H-hydrate epimerase</fullName>
            <ecNumber>5.1.99.6</ecNumber>
        </recommendedName>
        <alternativeName>
            <fullName>NAD(P)HX epimerase</fullName>
        </alternativeName>
    </domain>
</protein>
<dbReference type="EC" id="4.2.1.136"/>
<dbReference type="EC" id="5.1.99.6"/>
<dbReference type="EMBL" id="CP000254">
    <property type="protein sequence ID" value="ABD41982.1"/>
    <property type="molecule type" value="Genomic_DNA"/>
</dbReference>
<dbReference type="RefSeq" id="WP_011449240.1">
    <property type="nucleotide sequence ID" value="NC_007796.1"/>
</dbReference>
<dbReference type="SMR" id="Q2FT57"/>
<dbReference type="FunCoup" id="Q2FT57">
    <property type="interactions" value="4"/>
</dbReference>
<dbReference type="STRING" id="323259.Mhun_2277"/>
<dbReference type="EnsemblBacteria" id="ABD41982">
    <property type="protein sequence ID" value="ABD41982"/>
    <property type="gene ID" value="Mhun_2277"/>
</dbReference>
<dbReference type="GeneID" id="3925112"/>
<dbReference type="KEGG" id="mhu:Mhun_2277"/>
<dbReference type="eggNOG" id="arCOG00018">
    <property type="taxonomic scope" value="Archaea"/>
</dbReference>
<dbReference type="HOGENOM" id="CLU_024853_4_1_2"/>
<dbReference type="InParanoid" id="Q2FT57"/>
<dbReference type="OrthoDB" id="15148at2157"/>
<dbReference type="Proteomes" id="UP000001941">
    <property type="component" value="Chromosome"/>
</dbReference>
<dbReference type="GO" id="GO:0052855">
    <property type="term" value="F:ADP-dependent NAD(P)H-hydrate dehydratase activity"/>
    <property type="evidence" value="ECO:0007669"/>
    <property type="project" value="UniProtKB-UniRule"/>
</dbReference>
<dbReference type="GO" id="GO:0005524">
    <property type="term" value="F:ATP binding"/>
    <property type="evidence" value="ECO:0007669"/>
    <property type="project" value="UniProtKB-KW"/>
</dbReference>
<dbReference type="GO" id="GO:0046872">
    <property type="term" value="F:metal ion binding"/>
    <property type="evidence" value="ECO:0007669"/>
    <property type="project" value="UniProtKB-KW"/>
</dbReference>
<dbReference type="GO" id="GO:0052856">
    <property type="term" value="F:NAD(P)HX epimerase activity"/>
    <property type="evidence" value="ECO:0007669"/>
    <property type="project" value="UniProtKB-EC"/>
</dbReference>
<dbReference type="GO" id="GO:0110051">
    <property type="term" value="P:metabolite repair"/>
    <property type="evidence" value="ECO:0007669"/>
    <property type="project" value="TreeGrafter"/>
</dbReference>
<dbReference type="GO" id="GO:0046496">
    <property type="term" value="P:nicotinamide nucleotide metabolic process"/>
    <property type="evidence" value="ECO:0007669"/>
    <property type="project" value="UniProtKB-UniRule"/>
</dbReference>
<dbReference type="CDD" id="cd01171">
    <property type="entry name" value="YXKO-related"/>
    <property type="match status" value="1"/>
</dbReference>
<dbReference type="Gene3D" id="3.40.1190.20">
    <property type="match status" value="1"/>
</dbReference>
<dbReference type="Gene3D" id="3.40.50.10260">
    <property type="entry name" value="YjeF N-terminal domain"/>
    <property type="match status" value="1"/>
</dbReference>
<dbReference type="HAMAP" id="MF_01965">
    <property type="entry name" value="NADHX_dehydratase"/>
    <property type="match status" value="1"/>
</dbReference>
<dbReference type="InterPro" id="IPR000631">
    <property type="entry name" value="CARKD"/>
</dbReference>
<dbReference type="InterPro" id="IPR030677">
    <property type="entry name" value="Nnr"/>
</dbReference>
<dbReference type="InterPro" id="IPR029056">
    <property type="entry name" value="Ribokinase-like"/>
</dbReference>
<dbReference type="InterPro" id="IPR004443">
    <property type="entry name" value="YjeF_N_dom"/>
</dbReference>
<dbReference type="InterPro" id="IPR036652">
    <property type="entry name" value="YjeF_N_dom_sf"/>
</dbReference>
<dbReference type="NCBIfam" id="TIGR00196">
    <property type="entry name" value="yjeF_cterm"/>
    <property type="match status" value="1"/>
</dbReference>
<dbReference type="NCBIfam" id="TIGR00197">
    <property type="entry name" value="yjeF_nterm"/>
    <property type="match status" value="1"/>
</dbReference>
<dbReference type="PANTHER" id="PTHR12592:SF0">
    <property type="entry name" value="ATP-DEPENDENT (S)-NAD(P)H-HYDRATE DEHYDRATASE"/>
    <property type="match status" value="1"/>
</dbReference>
<dbReference type="PANTHER" id="PTHR12592">
    <property type="entry name" value="ATP-DEPENDENT (S)-NAD(P)H-HYDRATE DEHYDRATASE FAMILY MEMBER"/>
    <property type="match status" value="1"/>
</dbReference>
<dbReference type="Pfam" id="PF01256">
    <property type="entry name" value="Carb_kinase"/>
    <property type="match status" value="1"/>
</dbReference>
<dbReference type="Pfam" id="PF03853">
    <property type="entry name" value="YjeF_N"/>
    <property type="match status" value="1"/>
</dbReference>
<dbReference type="PIRSF" id="PIRSF017184">
    <property type="entry name" value="Nnr"/>
    <property type="match status" value="1"/>
</dbReference>
<dbReference type="SUPFAM" id="SSF53613">
    <property type="entry name" value="Ribokinase-like"/>
    <property type="match status" value="1"/>
</dbReference>
<dbReference type="SUPFAM" id="SSF64153">
    <property type="entry name" value="YjeF N-terminal domain-like"/>
    <property type="match status" value="1"/>
</dbReference>
<dbReference type="PROSITE" id="PS51383">
    <property type="entry name" value="YJEF_C_3"/>
    <property type="match status" value="1"/>
</dbReference>
<dbReference type="PROSITE" id="PS51385">
    <property type="entry name" value="YJEF_N"/>
    <property type="match status" value="1"/>
</dbReference>
<sequence length="479" mass="50414">MTVIIQGRSFPDDLTQYAEFIGQGLLSPEEMRRIDQNAQALGISGLELMESAGTGLAMAARQYQPGKILILCGSGNNGGDGMVAARHLAGEADITVFWYDSGRQTDSTRTQLQRLLSCSVTSIPFRSRDDLIEHTRIFQDTDLIIDALLGTGGTGSVREPVRTCIEFANNAKAPILSADLPSPGIIPDRICAFHRAKTEGAHIYGIGIPLLAEISTGPGDLLILRNRNPDSHKGVGGNILVIGGGPYQGAPYLAGLAALRAGADIVRVVSPHYLPEPDIIHVPTAGDRITTADLATIIPLCKQADVVLCGPGLGPESHDVITSLAPYIRKGVFDADALRDPLPVAGESLYTPHAGEFARMSGLSPGKTPRERAHAIMKAQILGTVLLKGAVDVICDGSRVRFNQTGTPAMTTGGTGDVLAGVCAALMAVVPAFEAACIGAYVTGRAGELITQTCGYGMTARDLLTAVPQVLFRSTSERE</sequence>
<accession>Q2FT57</accession>
<keyword id="KW-0067">ATP-binding</keyword>
<keyword id="KW-0413">Isomerase</keyword>
<keyword id="KW-0456">Lyase</keyword>
<keyword id="KW-0479">Metal-binding</keyword>
<keyword id="KW-0511">Multifunctional enzyme</keyword>
<keyword id="KW-0520">NAD</keyword>
<keyword id="KW-0521">NADP</keyword>
<keyword id="KW-0547">Nucleotide-binding</keyword>
<keyword id="KW-0630">Potassium</keyword>
<keyword id="KW-1185">Reference proteome</keyword>